<evidence type="ECO:0000255" key="1">
    <source>
        <dbReference type="HAMAP-Rule" id="MF_03100"/>
    </source>
</evidence>
<evidence type="ECO:0000256" key="2">
    <source>
        <dbReference type="SAM" id="MobiDB-lite"/>
    </source>
</evidence>
<proteinExistence type="inferred from homology"/>
<accession>A1CZX3</accession>
<dbReference type="EC" id="3.1.-.-" evidence="1"/>
<dbReference type="EMBL" id="DS027686">
    <property type="protein sequence ID" value="EAW24293.1"/>
    <property type="molecule type" value="Genomic_DNA"/>
</dbReference>
<dbReference type="RefSeq" id="XP_001266190.1">
    <property type="nucleotide sequence ID" value="XM_001266189.1"/>
</dbReference>
<dbReference type="SMR" id="A1CZX3"/>
<dbReference type="STRING" id="331117.A1CZX3"/>
<dbReference type="EnsemblFungi" id="EAW24293">
    <property type="protein sequence ID" value="EAW24293"/>
    <property type="gene ID" value="NFIA_038670"/>
</dbReference>
<dbReference type="GeneID" id="4592298"/>
<dbReference type="KEGG" id="nfi:NFIA_038670"/>
<dbReference type="VEuPathDB" id="FungiDB:NFIA_038670"/>
<dbReference type="eggNOG" id="KOG3005">
    <property type="taxonomic scope" value="Eukaryota"/>
</dbReference>
<dbReference type="HOGENOM" id="CLU_030739_1_0_1"/>
<dbReference type="OMA" id="HNRGCDF"/>
<dbReference type="OrthoDB" id="24645at2759"/>
<dbReference type="Proteomes" id="UP000006702">
    <property type="component" value="Unassembled WGS sequence"/>
</dbReference>
<dbReference type="GO" id="GO:0033557">
    <property type="term" value="C:Slx1-Slx4 complex"/>
    <property type="evidence" value="ECO:0007669"/>
    <property type="project" value="UniProtKB-UniRule"/>
</dbReference>
<dbReference type="GO" id="GO:0017108">
    <property type="term" value="F:5'-flap endonuclease activity"/>
    <property type="evidence" value="ECO:0007669"/>
    <property type="project" value="InterPro"/>
</dbReference>
<dbReference type="GO" id="GO:0008821">
    <property type="term" value="F:crossover junction DNA endonuclease activity"/>
    <property type="evidence" value="ECO:0007669"/>
    <property type="project" value="TreeGrafter"/>
</dbReference>
<dbReference type="GO" id="GO:0008270">
    <property type="term" value="F:zinc ion binding"/>
    <property type="evidence" value="ECO:0007669"/>
    <property type="project" value="UniProtKB-KW"/>
</dbReference>
<dbReference type="GO" id="GO:0000724">
    <property type="term" value="P:double-strand break repair via homologous recombination"/>
    <property type="evidence" value="ECO:0007669"/>
    <property type="project" value="TreeGrafter"/>
</dbReference>
<dbReference type="FunFam" id="3.30.40.10:FF:001101">
    <property type="entry name" value="Structure-specific endonuclease subunit slx1"/>
    <property type="match status" value="1"/>
</dbReference>
<dbReference type="Gene3D" id="3.40.1440.10">
    <property type="entry name" value="GIY-YIG endonuclease"/>
    <property type="match status" value="1"/>
</dbReference>
<dbReference type="Gene3D" id="3.30.40.10">
    <property type="entry name" value="Zinc/RING finger domain, C3HC4 (zinc finger)"/>
    <property type="match status" value="1"/>
</dbReference>
<dbReference type="HAMAP" id="MF_03100">
    <property type="entry name" value="Endonuc_su_Slx1"/>
    <property type="match status" value="1"/>
</dbReference>
<dbReference type="InterPro" id="IPR000305">
    <property type="entry name" value="GIY-YIG_endonuc"/>
</dbReference>
<dbReference type="InterPro" id="IPR035901">
    <property type="entry name" value="GIY-YIG_endonuc_sf"/>
</dbReference>
<dbReference type="InterPro" id="IPR027520">
    <property type="entry name" value="Slx1"/>
</dbReference>
<dbReference type="InterPro" id="IPR048749">
    <property type="entry name" value="SLX1_C"/>
</dbReference>
<dbReference type="InterPro" id="IPR050381">
    <property type="entry name" value="SLX1_endonuclease"/>
</dbReference>
<dbReference type="InterPro" id="IPR013083">
    <property type="entry name" value="Znf_RING/FYVE/PHD"/>
</dbReference>
<dbReference type="PANTHER" id="PTHR20208">
    <property type="entry name" value="STRUCTURE-SPECIFIC ENDONUCLEASE SUBUNIT SLX1"/>
    <property type="match status" value="1"/>
</dbReference>
<dbReference type="PANTHER" id="PTHR20208:SF10">
    <property type="entry name" value="STRUCTURE-SPECIFIC ENDONUCLEASE SUBUNIT SLX1"/>
    <property type="match status" value="1"/>
</dbReference>
<dbReference type="Pfam" id="PF01541">
    <property type="entry name" value="GIY-YIG"/>
    <property type="match status" value="1"/>
</dbReference>
<dbReference type="Pfam" id="PF21202">
    <property type="entry name" value="SLX1_C"/>
    <property type="match status" value="1"/>
</dbReference>
<dbReference type="PROSITE" id="PS50164">
    <property type="entry name" value="GIY_YIG"/>
    <property type="match status" value="1"/>
</dbReference>
<organism>
    <name type="scientific">Neosartorya fischeri (strain ATCC 1020 / DSM 3700 / CBS 544.65 / FGSC A1164 / JCM 1740 / NRRL 181 / WB 181)</name>
    <name type="common">Aspergillus fischerianus</name>
    <dbReference type="NCBI Taxonomy" id="331117"/>
    <lineage>
        <taxon>Eukaryota</taxon>
        <taxon>Fungi</taxon>
        <taxon>Dikarya</taxon>
        <taxon>Ascomycota</taxon>
        <taxon>Pezizomycotina</taxon>
        <taxon>Eurotiomycetes</taxon>
        <taxon>Eurotiomycetidae</taxon>
        <taxon>Eurotiales</taxon>
        <taxon>Aspergillaceae</taxon>
        <taxon>Aspergillus</taxon>
        <taxon>Aspergillus subgen. Fumigati</taxon>
    </lineage>
</organism>
<keyword id="KW-0227">DNA damage</keyword>
<keyword id="KW-0233">DNA recombination</keyword>
<keyword id="KW-0234">DNA repair</keyword>
<keyword id="KW-0255">Endonuclease</keyword>
<keyword id="KW-0378">Hydrolase</keyword>
<keyword id="KW-0479">Metal-binding</keyword>
<keyword id="KW-0540">Nuclease</keyword>
<keyword id="KW-0539">Nucleus</keyword>
<keyword id="KW-1185">Reference proteome</keyword>
<keyword id="KW-0862">Zinc</keyword>
<keyword id="KW-0863">Zinc-finger</keyword>
<reference key="1">
    <citation type="journal article" date="2008" name="PLoS Genet.">
        <title>Genomic islands in the pathogenic filamentous fungus Aspergillus fumigatus.</title>
        <authorList>
            <person name="Fedorova N.D."/>
            <person name="Khaldi N."/>
            <person name="Joardar V.S."/>
            <person name="Maiti R."/>
            <person name="Amedeo P."/>
            <person name="Anderson M.J."/>
            <person name="Crabtree J."/>
            <person name="Silva J.C."/>
            <person name="Badger J.H."/>
            <person name="Albarraq A."/>
            <person name="Angiuoli S."/>
            <person name="Bussey H."/>
            <person name="Bowyer P."/>
            <person name="Cotty P.J."/>
            <person name="Dyer P.S."/>
            <person name="Egan A."/>
            <person name="Galens K."/>
            <person name="Fraser-Liggett C.M."/>
            <person name="Haas B.J."/>
            <person name="Inman J.M."/>
            <person name="Kent R."/>
            <person name="Lemieux S."/>
            <person name="Malavazi I."/>
            <person name="Orvis J."/>
            <person name="Roemer T."/>
            <person name="Ronning C.M."/>
            <person name="Sundaram J.P."/>
            <person name="Sutton G."/>
            <person name="Turner G."/>
            <person name="Venter J.C."/>
            <person name="White O.R."/>
            <person name="Whitty B.R."/>
            <person name="Youngman P."/>
            <person name="Wolfe K.H."/>
            <person name="Goldman G.H."/>
            <person name="Wortman J.R."/>
            <person name="Jiang B."/>
            <person name="Denning D.W."/>
            <person name="Nierman W.C."/>
        </authorList>
    </citation>
    <scope>NUCLEOTIDE SEQUENCE [LARGE SCALE GENOMIC DNA]</scope>
    <source>
        <strain>ATCC 1020 / DSM 3700 / CBS 544.65 / FGSC A1164 / JCM 1740 / NRRL 181 / WB 181</strain>
    </source>
</reference>
<protein>
    <recommendedName>
        <fullName evidence="1">Structure-specific endonuclease subunit slx1</fullName>
        <ecNumber evidence="1">3.1.-.-</ecNumber>
    </recommendedName>
</protein>
<comment type="function">
    <text evidence="1">Catalytic subunit of the slx1-slx4 structure-specific endonuclease that resolves DNA secondary structures generated during DNA repair and recombination. Has endonuclease activity towards branched DNA substrates, introducing single-strand cuts in duplex DNA close to junctions with ss-DNA.</text>
</comment>
<comment type="cofactor">
    <cofactor evidence="1">
        <name>a divalent metal cation</name>
        <dbReference type="ChEBI" id="CHEBI:60240"/>
    </cofactor>
</comment>
<comment type="subunit">
    <text evidence="1">Forms a heterodimer with slx4.</text>
</comment>
<comment type="subcellular location">
    <subcellularLocation>
        <location evidence="1">Nucleus</location>
    </subcellularLocation>
</comment>
<comment type="similarity">
    <text evidence="1">Belongs to the SLX1 family.</text>
</comment>
<gene>
    <name type="primary">slx1</name>
    <name type="ORF">NFIA_038670</name>
</gene>
<name>SLX1_NEOFI</name>
<sequence>MEDIQIEHPRPIPIFYCCYLLRSTVRHASLYIGSTPNPARRLVQHNGVVKGGARRTAAEKLRPWEMLLVVEGFTSRLAALQFDSAPAEVKHRRKRKAKSGDPESLDSNCDSAKTKDKGTPKKSKRRPRPPRSLDTHFSDLHRLLRSTYFSHRPLKIRFFSGDIYQSWKAWYDRVDVRLRSPVKVILDGSCPEIGAHASGNDTRFGGVENAKITYATIQDYIEKAIFLLDDPKDVRCHVCQGQIVPKEELTTVCPQAECHCTCHLLCLSRKFIDAAEEPNQIVPRHGICPACEATVEWPLMMKELSFRSRAKQELLEILKRKRRVDRKQSVVTGKVESSSRRSVSVDLDDRFGQDAEDEFLLDEDWWDGLASESDSDADRRLKTLSKAAPKLETVIEDSECDDAEIL</sequence>
<feature type="chain" id="PRO_0000383787" description="Structure-specific endonuclease subunit slx1">
    <location>
        <begin position="1"/>
        <end position="406"/>
    </location>
</feature>
<feature type="domain" description="GIY-YIG" evidence="1">
    <location>
        <begin position="14"/>
        <end position="98"/>
    </location>
</feature>
<feature type="zinc finger region" description="SLX1-type" evidence="1">
    <location>
        <begin position="236"/>
        <end position="291"/>
    </location>
</feature>
<feature type="region of interest" description="Disordered" evidence="2">
    <location>
        <begin position="88"/>
        <end position="136"/>
    </location>
</feature>
<feature type="compositionally biased region" description="Basic residues" evidence="2">
    <location>
        <begin position="120"/>
        <end position="129"/>
    </location>
</feature>